<feature type="chain" id="PRO_0000410849" description="Octanoyltransferase LipM">
    <location>
        <begin position="1"/>
        <end position="278"/>
    </location>
</feature>
<feature type="domain" description="BPL/LPL catalytic" evidence="2">
    <location>
        <begin position="33"/>
        <end position="248"/>
    </location>
</feature>
<feature type="active site" description="Acyl-thioester intermediate" evidence="1">
    <location>
        <position position="150"/>
    </location>
</feature>
<feature type="site" description="Lowers pKa of active site Cys" evidence="1">
    <location>
        <position position="165"/>
    </location>
</feature>
<sequence length="278" mass="32103">MGKEKWCYINSGQCSPAFNMALDECLLNWQSEKKMPPTIRFYEWEVPTLTVGYFQRVEKDINMDVVNEKKYGFVRRQTGGRGVLHDKELTYSVIVSEDHPNMPKTVTEAYRVISQGLLDGFKALGLEAYYAVPKTEADRENLKNPRSGVCFDAPSWYEIVVEGRKIAGSAQTRQKGVILQHGSIPLEIDLDELYDLFLFPNERVKERMKSMFASKAVAINELTDRTFTIEQLIKAFEVGFEKGLDVELVPYELTEEQLHEVQTLAKEKYESKEWNYKK</sequence>
<gene>
    <name evidence="1" type="primary">lipM</name>
    <name type="ordered locus">BA_4431</name>
    <name type="ordered locus">GBAA_4431</name>
    <name type="ordered locus">BAS4111</name>
</gene>
<keyword id="KW-0012">Acyltransferase</keyword>
<keyword id="KW-1185">Reference proteome</keyword>
<keyword id="KW-0808">Transferase</keyword>
<organism>
    <name type="scientific">Bacillus anthracis</name>
    <dbReference type="NCBI Taxonomy" id="1392"/>
    <lineage>
        <taxon>Bacteria</taxon>
        <taxon>Bacillati</taxon>
        <taxon>Bacillota</taxon>
        <taxon>Bacilli</taxon>
        <taxon>Bacillales</taxon>
        <taxon>Bacillaceae</taxon>
        <taxon>Bacillus</taxon>
        <taxon>Bacillus cereus group</taxon>
    </lineage>
</organism>
<protein>
    <recommendedName>
        <fullName evidence="1">Octanoyltransferase LipM</fullName>
        <ecNumber evidence="1">2.3.1.181</ecNumber>
    </recommendedName>
    <alternativeName>
        <fullName evidence="1">Octanoyl-[acyl-carrier-protein]:[GcvH] N-octanoyltransferase</fullName>
    </alternativeName>
</protein>
<comment type="function">
    <text evidence="1">Catalyzes the transfer of endogenously produced octanoic acid from octanoyl-acyl-carrier-protein onto the lipoyl domain of GcvH, an intermediate carrier during protein lipoylation.</text>
</comment>
<comment type="catalytic activity">
    <reaction evidence="1">
        <text>octanoyl-[ACP] + L-lysyl-[protein] = N(6)-octanoyl-L-lysyl-[protein] + holo-[ACP] + H(+)</text>
        <dbReference type="Rhea" id="RHEA:17665"/>
        <dbReference type="Rhea" id="RHEA-COMP:9636"/>
        <dbReference type="Rhea" id="RHEA-COMP:9685"/>
        <dbReference type="Rhea" id="RHEA-COMP:9752"/>
        <dbReference type="Rhea" id="RHEA-COMP:9928"/>
        <dbReference type="ChEBI" id="CHEBI:15378"/>
        <dbReference type="ChEBI" id="CHEBI:29969"/>
        <dbReference type="ChEBI" id="CHEBI:64479"/>
        <dbReference type="ChEBI" id="CHEBI:78463"/>
        <dbReference type="ChEBI" id="CHEBI:78809"/>
        <dbReference type="EC" id="2.3.1.181"/>
    </reaction>
</comment>
<comment type="pathway">
    <text evidence="1">Protein modification; protein lipoylation via endogenous pathway; protein N(6)-(lipoyl)lysine from octanoyl-[acyl-carrier-protein].</text>
</comment>
<comment type="subunit">
    <text evidence="1">Monomer.</text>
</comment>
<comment type="miscellaneous">
    <text evidence="1">In the reaction, the free carboxyl group of octanoic acid is attached via an amide linkage to the epsilon-amino group of a specific lysine residue of lipoyl domains of lipoate-dependent enzymes. The reaction proceeds via an octanoyl-thioester enzyme intermediate.</text>
</comment>
<comment type="similarity">
    <text evidence="1">Belongs to the octanoyltransferase LipM family.</text>
</comment>
<proteinExistence type="inferred from homology"/>
<name>LIPM_BACAN</name>
<dbReference type="EC" id="2.3.1.181" evidence="1"/>
<dbReference type="EMBL" id="AE016879">
    <property type="protein sequence ID" value="AAP28145.1"/>
    <property type="molecule type" value="Genomic_DNA"/>
</dbReference>
<dbReference type="EMBL" id="AE017334">
    <property type="protein sequence ID" value="AAT33548.1"/>
    <property type="molecule type" value="Genomic_DNA"/>
</dbReference>
<dbReference type="EMBL" id="AE017225">
    <property type="protein sequence ID" value="AAT56412.1"/>
    <property type="molecule type" value="Genomic_DNA"/>
</dbReference>
<dbReference type="RefSeq" id="NP_846659.1">
    <property type="nucleotide sequence ID" value="NC_003997.3"/>
</dbReference>
<dbReference type="RefSeq" id="WP_000514074.1">
    <property type="nucleotide sequence ID" value="NZ_WXXJ01000027.1"/>
</dbReference>
<dbReference type="RefSeq" id="YP_030361.1">
    <property type="nucleotide sequence ID" value="NC_005945.1"/>
</dbReference>
<dbReference type="SMR" id="Q81M24"/>
<dbReference type="STRING" id="261594.GBAA_4431"/>
<dbReference type="DNASU" id="1087804"/>
<dbReference type="GeneID" id="45024091"/>
<dbReference type="KEGG" id="ban:BA_4431"/>
<dbReference type="KEGG" id="bar:GBAA_4431"/>
<dbReference type="KEGG" id="bat:BAS4111"/>
<dbReference type="PATRIC" id="fig|198094.11.peg.4400"/>
<dbReference type="eggNOG" id="COG0095">
    <property type="taxonomic scope" value="Bacteria"/>
</dbReference>
<dbReference type="HOGENOM" id="CLU_022986_5_0_9"/>
<dbReference type="OMA" id="AGRGYIH"/>
<dbReference type="OrthoDB" id="9774653at2"/>
<dbReference type="Proteomes" id="UP000000427">
    <property type="component" value="Chromosome"/>
</dbReference>
<dbReference type="Proteomes" id="UP000000594">
    <property type="component" value="Chromosome"/>
</dbReference>
<dbReference type="GO" id="GO:0033819">
    <property type="term" value="F:lipoyl(octanoyl) transferase activity"/>
    <property type="evidence" value="ECO:0007669"/>
    <property type="project" value="UniProtKB-UniRule"/>
</dbReference>
<dbReference type="GO" id="GO:0009107">
    <property type="term" value="P:lipoate biosynthetic process"/>
    <property type="evidence" value="ECO:0007669"/>
    <property type="project" value="UniProtKB-UniRule"/>
</dbReference>
<dbReference type="GO" id="GO:0036211">
    <property type="term" value="P:protein modification process"/>
    <property type="evidence" value="ECO:0007669"/>
    <property type="project" value="InterPro"/>
</dbReference>
<dbReference type="CDD" id="cd16443">
    <property type="entry name" value="LplA"/>
    <property type="match status" value="1"/>
</dbReference>
<dbReference type="Gene3D" id="3.30.930.10">
    <property type="entry name" value="Bira Bifunctional Protein, Domain 2"/>
    <property type="match status" value="1"/>
</dbReference>
<dbReference type="HAMAP" id="MF_02118">
    <property type="entry name" value="LipM"/>
    <property type="match status" value="1"/>
</dbReference>
<dbReference type="InterPro" id="IPR045864">
    <property type="entry name" value="aa-tRNA-synth_II/BPL/LPL"/>
</dbReference>
<dbReference type="InterPro" id="IPR004143">
    <property type="entry name" value="BPL_LPL_catalytic"/>
</dbReference>
<dbReference type="InterPro" id="IPR024898">
    <property type="entry name" value="LipM"/>
</dbReference>
<dbReference type="InterPro" id="IPR050664">
    <property type="entry name" value="Octanoyltrans_LipM/LipL"/>
</dbReference>
<dbReference type="PANTHER" id="PTHR43679:SF2">
    <property type="entry name" value="OCTANOYL-[GCVH]:PROTEIN N-OCTANOYLTRANSFERASE"/>
    <property type="match status" value="1"/>
</dbReference>
<dbReference type="PANTHER" id="PTHR43679">
    <property type="entry name" value="OCTANOYLTRANSFERASE LIPM-RELATED"/>
    <property type="match status" value="1"/>
</dbReference>
<dbReference type="Pfam" id="PF21948">
    <property type="entry name" value="LplA-B_cat"/>
    <property type="match status" value="1"/>
</dbReference>
<dbReference type="SUPFAM" id="SSF55681">
    <property type="entry name" value="Class II aaRS and biotin synthetases"/>
    <property type="match status" value="1"/>
</dbReference>
<dbReference type="PROSITE" id="PS51733">
    <property type="entry name" value="BPL_LPL_CATALYTIC"/>
    <property type="match status" value="1"/>
</dbReference>
<reference key="1">
    <citation type="journal article" date="2003" name="Nature">
        <title>The genome sequence of Bacillus anthracis Ames and comparison to closely related bacteria.</title>
        <authorList>
            <person name="Read T.D."/>
            <person name="Peterson S.N."/>
            <person name="Tourasse N.J."/>
            <person name="Baillie L.W."/>
            <person name="Paulsen I.T."/>
            <person name="Nelson K.E."/>
            <person name="Tettelin H."/>
            <person name="Fouts D.E."/>
            <person name="Eisen J.A."/>
            <person name="Gill S.R."/>
            <person name="Holtzapple E.K."/>
            <person name="Okstad O.A."/>
            <person name="Helgason E."/>
            <person name="Rilstone J."/>
            <person name="Wu M."/>
            <person name="Kolonay J.F."/>
            <person name="Beanan M.J."/>
            <person name="Dodson R.J."/>
            <person name="Brinkac L.M."/>
            <person name="Gwinn M.L."/>
            <person name="DeBoy R.T."/>
            <person name="Madpu R."/>
            <person name="Daugherty S.C."/>
            <person name="Durkin A.S."/>
            <person name="Haft D.H."/>
            <person name="Nelson W.C."/>
            <person name="Peterson J.D."/>
            <person name="Pop M."/>
            <person name="Khouri H.M."/>
            <person name="Radune D."/>
            <person name="Benton J.L."/>
            <person name="Mahamoud Y."/>
            <person name="Jiang L."/>
            <person name="Hance I.R."/>
            <person name="Weidman J.F."/>
            <person name="Berry K.J."/>
            <person name="Plaut R.D."/>
            <person name="Wolf A.M."/>
            <person name="Watkins K.L."/>
            <person name="Nierman W.C."/>
            <person name="Hazen A."/>
            <person name="Cline R.T."/>
            <person name="Redmond C."/>
            <person name="Thwaite J.E."/>
            <person name="White O."/>
            <person name="Salzberg S.L."/>
            <person name="Thomason B."/>
            <person name="Friedlander A.M."/>
            <person name="Koehler T.M."/>
            <person name="Hanna P.C."/>
            <person name="Kolstoe A.-B."/>
            <person name="Fraser C.M."/>
        </authorList>
    </citation>
    <scope>NUCLEOTIDE SEQUENCE [LARGE SCALE GENOMIC DNA]</scope>
    <source>
        <strain>Ames / isolate Porton</strain>
    </source>
</reference>
<reference key="2">
    <citation type="journal article" date="2009" name="J. Bacteriol.">
        <title>The complete genome sequence of Bacillus anthracis Ames 'Ancestor'.</title>
        <authorList>
            <person name="Ravel J."/>
            <person name="Jiang L."/>
            <person name="Stanley S.T."/>
            <person name="Wilson M.R."/>
            <person name="Decker R.S."/>
            <person name="Read T.D."/>
            <person name="Worsham P."/>
            <person name="Keim P.S."/>
            <person name="Salzberg S.L."/>
            <person name="Fraser-Liggett C.M."/>
            <person name="Rasko D.A."/>
        </authorList>
    </citation>
    <scope>NUCLEOTIDE SEQUENCE [LARGE SCALE GENOMIC DNA]</scope>
    <source>
        <strain>Ames ancestor</strain>
    </source>
</reference>
<reference key="3">
    <citation type="submission" date="2004-01" db="EMBL/GenBank/DDBJ databases">
        <title>Complete genome sequence of Bacillus anthracis Sterne.</title>
        <authorList>
            <person name="Brettin T.S."/>
            <person name="Bruce D."/>
            <person name="Challacombe J.F."/>
            <person name="Gilna P."/>
            <person name="Han C."/>
            <person name="Hill K."/>
            <person name="Hitchcock P."/>
            <person name="Jackson P."/>
            <person name="Keim P."/>
            <person name="Longmire J."/>
            <person name="Lucas S."/>
            <person name="Okinaka R."/>
            <person name="Richardson P."/>
            <person name="Rubin E."/>
            <person name="Tice H."/>
        </authorList>
    </citation>
    <scope>NUCLEOTIDE SEQUENCE [LARGE SCALE GENOMIC DNA]</scope>
    <source>
        <strain>Sterne</strain>
    </source>
</reference>
<accession>Q81M24</accession>
<accession>E9R366</accession>
<accession>E9R367</accession>
<accession>Q6HTH7</accession>
<accession>Q6KMR8</accession>
<evidence type="ECO:0000255" key="1">
    <source>
        <dbReference type="HAMAP-Rule" id="MF_02118"/>
    </source>
</evidence>
<evidence type="ECO:0000255" key="2">
    <source>
        <dbReference type="PROSITE-ProRule" id="PRU01067"/>
    </source>
</evidence>